<reference key="1">
    <citation type="journal article" date="2007" name="Genome Res.">
        <title>Genome characteristics of facultatively symbiotic Frankia sp. strains reflect host range and host plant biogeography.</title>
        <authorList>
            <person name="Normand P."/>
            <person name="Lapierre P."/>
            <person name="Tisa L.S."/>
            <person name="Gogarten J.P."/>
            <person name="Alloisio N."/>
            <person name="Bagnarol E."/>
            <person name="Bassi C.A."/>
            <person name="Berry A.M."/>
            <person name="Bickhart D.M."/>
            <person name="Choisne N."/>
            <person name="Couloux A."/>
            <person name="Cournoyer B."/>
            <person name="Cruveiller S."/>
            <person name="Daubin V."/>
            <person name="Demange N."/>
            <person name="Francino M.P."/>
            <person name="Goltsman E."/>
            <person name="Huang Y."/>
            <person name="Kopp O.R."/>
            <person name="Labarre L."/>
            <person name="Lapidus A."/>
            <person name="Lavire C."/>
            <person name="Marechal J."/>
            <person name="Martinez M."/>
            <person name="Mastronunzio J.E."/>
            <person name="Mullin B.C."/>
            <person name="Niemann J."/>
            <person name="Pujic P."/>
            <person name="Rawnsley T."/>
            <person name="Rouy Z."/>
            <person name="Schenowitz C."/>
            <person name="Sellstedt A."/>
            <person name="Tavares F."/>
            <person name="Tomkins J.P."/>
            <person name="Vallenet D."/>
            <person name="Valverde C."/>
            <person name="Wall L.G."/>
            <person name="Wang Y."/>
            <person name="Medigue C."/>
            <person name="Benson D.R."/>
        </authorList>
    </citation>
    <scope>NUCLEOTIDE SEQUENCE [LARGE SCALE GENOMIC DNA]</scope>
    <source>
        <strain>DSM 45818 / CECT 9043 / HFP020203 / CcI3</strain>
    </source>
</reference>
<feature type="chain" id="PRO_0000244211" description="Large ribosomal subunit protein bL25">
    <location>
        <begin position="1"/>
        <end position="210"/>
    </location>
</feature>
<name>RL25_FRACC</name>
<keyword id="KW-1185">Reference proteome</keyword>
<keyword id="KW-0687">Ribonucleoprotein</keyword>
<keyword id="KW-0689">Ribosomal protein</keyword>
<keyword id="KW-0694">RNA-binding</keyword>
<keyword id="KW-0699">rRNA-binding</keyword>
<accession>Q2J5Z0</accession>
<proteinExistence type="inferred from homology"/>
<organism>
    <name type="scientific">Frankia casuarinae (strain DSM 45818 / CECT 9043 / HFP020203 / CcI3)</name>
    <dbReference type="NCBI Taxonomy" id="106370"/>
    <lineage>
        <taxon>Bacteria</taxon>
        <taxon>Bacillati</taxon>
        <taxon>Actinomycetota</taxon>
        <taxon>Actinomycetes</taxon>
        <taxon>Frankiales</taxon>
        <taxon>Frankiaceae</taxon>
        <taxon>Frankia</taxon>
    </lineage>
</organism>
<gene>
    <name evidence="1" type="primary">rplY</name>
    <name evidence="1" type="synonym">ctc</name>
    <name type="ordered locus">Francci3_3952</name>
</gene>
<sequence>MSAAMSEVRIAAEPRTEFGKGGARRTRRAGKVPAVLYGHGKPPRHIALPAHDLLHAFKTDAGTNVLLTLELAEGTELALAKDVQRHPIKGSFEHIDLVLVARGEKVVADIPVQVIGEPHPDTLVDQQVTTIAVKADATRLPGPIEVDITGLEPGTSILARQLVLPAGSELDADPDLVVVQCLAKRTNAQQEASLGETPVAEEAGVASASV</sequence>
<evidence type="ECO:0000255" key="1">
    <source>
        <dbReference type="HAMAP-Rule" id="MF_01334"/>
    </source>
</evidence>
<evidence type="ECO:0000305" key="2"/>
<dbReference type="EMBL" id="CP000249">
    <property type="protein sequence ID" value="ABD13302.1"/>
    <property type="molecule type" value="Genomic_DNA"/>
</dbReference>
<dbReference type="SMR" id="Q2J5Z0"/>
<dbReference type="STRING" id="106370.Francci3_3952"/>
<dbReference type="KEGG" id="fra:Francci3_3952"/>
<dbReference type="eggNOG" id="COG1825">
    <property type="taxonomic scope" value="Bacteria"/>
</dbReference>
<dbReference type="HOGENOM" id="CLU_075939_1_0_11"/>
<dbReference type="PhylomeDB" id="Q2J5Z0"/>
<dbReference type="Proteomes" id="UP000001937">
    <property type="component" value="Chromosome"/>
</dbReference>
<dbReference type="GO" id="GO:0022625">
    <property type="term" value="C:cytosolic large ribosomal subunit"/>
    <property type="evidence" value="ECO:0007669"/>
    <property type="project" value="TreeGrafter"/>
</dbReference>
<dbReference type="GO" id="GO:0008097">
    <property type="term" value="F:5S rRNA binding"/>
    <property type="evidence" value="ECO:0007669"/>
    <property type="project" value="InterPro"/>
</dbReference>
<dbReference type="GO" id="GO:0003735">
    <property type="term" value="F:structural constituent of ribosome"/>
    <property type="evidence" value="ECO:0007669"/>
    <property type="project" value="InterPro"/>
</dbReference>
<dbReference type="GO" id="GO:0006412">
    <property type="term" value="P:translation"/>
    <property type="evidence" value="ECO:0007669"/>
    <property type="project" value="UniProtKB-UniRule"/>
</dbReference>
<dbReference type="CDD" id="cd00495">
    <property type="entry name" value="Ribosomal_L25_TL5_CTC"/>
    <property type="match status" value="1"/>
</dbReference>
<dbReference type="Gene3D" id="2.170.120.20">
    <property type="entry name" value="Ribosomal protein L25, beta domain"/>
    <property type="match status" value="1"/>
</dbReference>
<dbReference type="Gene3D" id="2.40.240.10">
    <property type="entry name" value="Ribosomal Protein L25, Chain P"/>
    <property type="match status" value="1"/>
</dbReference>
<dbReference type="HAMAP" id="MF_01334">
    <property type="entry name" value="Ribosomal_bL25_CTC"/>
    <property type="match status" value="1"/>
</dbReference>
<dbReference type="InterPro" id="IPR020056">
    <property type="entry name" value="Rbsml_bL25/Gln-tRNA_synth_N"/>
</dbReference>
<dbReference type="InterPro" id="IPR011035">
    <property type="entry name" value="Ribosomal_bL25/Gln-tRNA_synth"/>
</dbReference>
<dbReference type="InterPro" id="IPR020057">
    <property type="entry name" value="Ribosomal_bL25_b-dom"/>
</dbReference>
<dbReference type="InterPro" id="IPR037121">
    <property type="entry name" value="Ribosomal_bL25_C"/>
</dbReference>
<dbReference type="InterPro" id="IPR001021">
    <property type="entry name" value="Ribosomal_bL25_long"/>
</dbReference>
<dbReference type="InterPro" id="IPR029751">
    <property type="entry name" value="Ribosomal_L25_dom"/>
</dbReference>
<dbReference type="InterPro" id="IPR020930">
    <property type="entry name" value="Ribosomal_uL5_bac-type"/>
</dbReference>
<dbReference type="NCBIfam" id="TIGR00731">
    <property type="entry name" value="bL25_bact_ctc"/>
    <property type="match status" value="1"/>
</dbReference>
<dbReference type="NCBIfam" id="NF004131">
    <property type="entry name" value="PRK05618.2-1"/>
    <property type="match status" value="1"/>
</dbReference>
<dbReference type="PANTHER" id="PTHR33284">
    <property type="entry name" value="RIBOSOMAL PROTEIN L25/GLN-TRNA SYNTHETASE, ANTI-CODON-BINDING DOMAIN-CONTAINING PROTEIN"/>
    <property type="match status" value="1"/>
</dbReference>
<dbReference type="PANTHER" id="PTHR33284:SF1">
    <property type="entry name" value="RIBOSOMAL PROTEIN L25_GLN-TRNA SYNTHETASE, ANTI-CODON-BINDING DOMAIN-CONTAINING PROTEIN"/>
    <property type="match status" value="1"/>
</dbReference>
<dbReference type="Pfam" id="PF01386">
    <property type="entry name" value="Ribosomal_L25p"/>
    <property type="match status" value="1"/>
</dbReference>
<dbReference type="Pfam" id="PF14693">
    <property type="entry name" value="Ribosomal_TL5_C"/>
    <property type="match status" value="1"/>
</dbReference>
<dbReference type="SUPFAM" id="SSF50715">
    <property type="entry name" value="Ribosomal protein L25-like"/>
    <property type="match status" value="1"/>
</dbReference>
<comment type="function">
    <text evidence="1">This is one of the proteins that binds to the 5S RNA in the ribosome where it forms part of the central protuberance.</text>
</comment>
<comment type="subunit">
    <text evidence="1">Part of the 50S ribosomal subunit; part of the 5S rRNA/L5/L18/L25 subcomplex. Contacts the 5S rRNA. Binds to the 5S rRNA independently of L5 and L18.</text>
</comment>
<comment type="similarity">
    <text evidence="1">Belongs to the bacterial ribosomal protein bL25 family. CTC subfamily.</text>
</comment>
<protein>
    <recommendedName>
        <fullName evidence="1">Large ribosomal subunit protein bL25</fullName>
    </recommendedName>
    <alternativeName>
        <fullName evidence="2">50S ribosomal protein L25</fullName>
    </alternativeName>
    <alternativeName>
        <fullName evidence="1">General stress protein CTC</fullName>
    </alternativeName>
</protein>